<reference key="1">
    <citation type="journal article" date="2004" name="Genome Res.">
        <title>The status, quality, and expansion of the NIH full-length cDNA project: the Mammalian Gene Collection (MGC).</title>
        <authorList>
            <consortium name="The MGC Project Team"/>
        </authorList>
    </citation>
    <scope>NUCLEOTIDE SEQUENCE [LARGE SCALE MRNA]</scope>
    <source>
        <tissue>Brain</tissue>
    </source>
</reference>
<reference key="2">
    <citation type="journal article" date="2012" name="Nat. Commun.">
        <title>Quantitative maps of protein phosphorylation sites across 14 different rat organs and tissues.</title>
        <authorList>
            <person name="Lundby A."/>
            <person name="Secher A."/>
            <person name="Lage K."/>
            <person name="Nordsborg N.B."/>
            <person name="Dmytriyev A."/>
            <person name="Lundby C."/>
            <person name="Olsen J.V."/>
        </authorList>
    </citation>
    <scope>PHOSPHORYLATION [LARGE SCALE ANALYSIS] AT SER-60 AND SER-84</scope>
    <scope>IDENTIFICATION BY MASS SPECTROMETRY [LARGE SCALE ANALYSIS]</scope>
</reference>
<feature type="chain" id="PRO_0000064474" description="Protein AF1q">
    <location>
        <begin position="1"/>
        <end position="90"/>
    </location>
</feature>
<feature type="region of interest" description="Disordered" evidence="2">
    <location>
        <begin position="33"/>
        <end position="63"/>
    </location>
</feature>
<feature type="short sequence motif" description="Nuclear export signal" evidence="1">
    <location>
        <begin position="24"/>
        <end position="32"/>
    </location>
</feature>
<feature type="modified residue" description="Phosphoserine" evidence="4">
    <location>
        <position position="60"/>
    </location>
</feature>
<feature type="modified residue" description="Phosphoserine" evidence="4">
    <location>
        <position position="84"/>
    </location>
</feature>
<comment type="function">
    <text evidence="1">Cofactor for the transcription factor TCF7. Involved in regulation of lymphoid development by driving multipotent hematopoietic progenitor cells towards a T-cell fate.</text>
</comment>
<comment type="subunit">
    <text evidence="1">Interacts with HSPA8 and LAMP2 isoform A; the interaction may target MLLT11 for degradation via chaperone-mediated autophagy. Interacts with TCF7.</text>
</comment>
<comment type="subcellular location">
    <subcellularLocation>
        <location evidence="1">Nucleus</location>
    </subcellularLocation>
    <subcellularLocation>
        <location evidence="1">Cytoplasm</location>
    </subcellularLocation>
    <subcellularLocation>
        <location evidence="1">Cytoplasm</location>
        <location evidence="1">Cytoskeleton</location>
        <location evidence="1">Microtubule organizing center</location>
        <location evidence="1">Centrosome</location>
    </subcellularLocation>
    <text evidence="1">Continuous nuclear export is followed by degradation.</text>
</comment>
<comment type="PTM">
    <text evidence="1">Ubiquitinated, leading to degradation.</text>
</comment>
<comment type="similarity">
    <text evidence="3">Belongs to the MLLT11 family.</text>
</comment>
<name>AF1Q_RAT</name>
<gene>
    <name type="primary">Mllt11</name>
    <name type="synonym">Af1q</name>
</gene>
<evidence type="ECO:0000250" key="1">
    <source>
        <dbReference type="UniProtKB" id="Q13015"/>
    </source>
</evidence>
<evidence type="ECO:0000256" key="2">
    <source>
        <dbReference type="SAM" id="MobiDB-lite"/>
    </source>
</evidence>
<evidence type="ECO:0000305" key="3"/>
<evidence type="ECO:0007744" key="4">
    <source>
    </source>
</evidence>
<sequence>MRDPVSSQYSSFLFWRMPIPELDLSELEGLGLSDSPTYKSKESNSIGKMGGQATGAERKSPEGDPLLEYSTFNFWRAPIASIRSIDLDLL</sequence>
<proteinExistence type="evidence at protein level"/>
<dbReference type="EMBL" id="BC087583">
    <property type="protein sequence ID" value="AAH87583.1"/>
    <property type="molecule type" value="mRNA"/>
</dbReference>
<dbReference type="EMBL" id="BC094215">
    <property type="protein sequence ID" value="AAH94215.1"/>
    <property type="molecule type" value="mRNA"/>
</dbReference>
<dbReference type="RefSeq" id="NP_001013934.1">
    <property type="nucleotide sequence ID" value="NM_001013912.1"/>
</dbReference>
<dbReference type="FunCoup" id="Q5M971">
    <property type="interactions" value="1280"/>
</dbReference>
<dbReference type="STRING" id="10116.ENSRNOP00000028664"/>
<dbReference type="iPTMnet" id="Q5M971"/>
<dbReference type="PhosphoSitePlus" id="Q5M971"/>
<dbReference type="jPOST" id="Q5M971"/>
<dbReference type="PaxDb" id="10116-ENSRNOP00000028664"/>
<dbReference type="GeneID" id="295264"/>
<dbReference type="KEGG" id="rno:295264"/>
<dbReference type="UCSC" id="RGD:1305525">
    <property type="organism name" value="rat"/>
</dbReference>
<dbReference type="AGR" id="RGD:1305525"/>
<dbReference type="CTD" id="10962"/>
<dbReference type="RGD" id="1305525">
    <property type="gene designation" value="Mllt11"/>
</dbReference>
<dbReference type="eggNOG" id="ENOG502S7MB">
    <property type="taxonomic scope" value="Eukaryota"/>
</dbReference>
<dbReference type="HOGENOM" id="CLU_2440320_0_0_1"/>
<dbReference type="InParanoid" id="Q5M971"/>
<dbReference type="OrthoDB" id="9991950at2759"/>
<dbReference type="PhylomeDB" id="Q5M971"/>
<dbReference type="TreeFam" id="TF336906"/>
<dbReference type="ChiTaRS" id="Mllt11">
    <property type="organism name" value="rat"/>
</dbReference>
<dbReference type="PRO" id="PR:Q5M971"/>
<dbReference type="Proteomes" id="UP000002494">
    <property type="component" value="Chromosome 2"/>
</dbReference>
<dbReference type="Bgee" id="ENSRNOG00000021110">
    <property type="expression patterns" value="Expressed in frontal cortex and 20 other cell types or tissues"/>
</dbReference>
<dbReference type="GO" id="GO:0005813">
    <property type="term" value="C:centrosome"/>
    <property type="evidence" value="ECO:0007669"/>
    <property type="project" value="UniProtKB-SubCell"/>
</dbReference>
<dbReference type="GO" id="GO:0005737">
    <property type="term" value="C:cytoplasm"/>
    <property type="evidence" value="ECO:0000266"/>
    <property type="project" value="RGD"/>
</dbReference>
<dbReference type="GO" id="GO:0005829">
    <property type="term" value="C:cytosol"/>
    <property type="evidence" value="ECO:0000318"/>
    <property type="project" value="GO_Central"/>
</dbReference>
<dbReference type="GO" id="GO:0005654">
    <property type="term" value="C:nucleoplasm"/>
    <property type="evidence" value="ECO:0000318"/>
    <property type="project" value="GO_Central"/>
</dbReference>
<dbReference type="GO" id="GO:0097191">
    <property type="term" value="P:extrinsic apoptotic signaling pathway"/>
    <property type="evidence" value="ECO:0000250"/>
    <property type="project" value="UniProtKB"/>
</dbReference>
<dbReference type="GO" id="GO:0097193">
    <property type="term" value="P:intrinsic apoptotic signaling pathway"/>
    <property type="evidence" value="ECO:0000250"/>
    <property type="project" value="UniProtKB"/>
</dbReference>
<dbReference type="GO" id="GO:0043065">
    <property type="term" value="P:positive regulation of apoptotic process"/>
    <property type="evidence" value="ECO:0000250"/>
    <property type="project" value="UniProtKB"/>
</dbReference>
<dbReference type="GO" id="GO:0045893">
    <property type="term" value="P:positive regulation of DNA-templated transcription"/>
    <property type="evidence" value="ECO:0000250"/>
    <property type="project" value="UniProtKB"/>
</dbReference>
<dbReference type="GO" id="GO:0051901">
    <property type="term" value="P:positive regulation of mitochondrial depolarization"/>
    <property type="evidence" value="ECO:0000250"/>
    <property type="project" value="UniProtKB"/>
</dbReference>
<dbReference type="GO" id="GO:0090200">
    <property type="term" value="P:positive regulation of release of cytochrome c from mitochondria"/>
    <property type="evidence" value="ECO:0000250"/>
    <property type="project" value="UniProtKB"/>
</dbReference>
<dbReference type="InterPro" id="IPR026778">
    <property type="entry name" value="MLLT11_fam"/>
</dbReference>
<dbReference type="InterPro" id="IPR033461">
    <property type="entry name" value="WRNPLPNID"/>
</dbReference>
<dbReference type="PANTHER" id="PTHR15404">
    <property type="entry name" value="PROTEIN AF1Q"/>
    <property type="match status" value="1"/>
</dbReference>
<dbReference type="PANTHER" id="PTHR15404:SF2">
    <property type="entry name" value="PROTEIN AF1Q"/>
    <property type="match status" value="1"/>
</dbReference>
<dbReference type="Pfam" id="PF15017">
    <property type="entry name" value="WRNPLPNID"/>
    <property type="match status" value="1"/>
</dbReference>
<accession>Q5M971</accession>
<accession>Q52KR8</accession>
<organism>
    <name type="scientific">Rattus norvegicus</name>
    <name type="common">Rat</name>
    <dbReference type="NCBI Taxonomy" id="10116"/>
    <lineage>
        <taxon>Eukaryota</taxon>
        <taxon>Metazoa</taxon>
        <taxon>Chordata</taxon>
        <taxon>Craniata</taxon>
        <taxon>Vertebrata</taxon>
        <taxon>Euteleostomi</taxon>
        <taxon>Mammalia</taxon>
        <taxon>Eutheria</taxon>
        <taxon>Euarchontoglires</taxon>
        <taxon>Glires</taxon>
        <taxon>Rodentia</taxon>
        <taxon>Myomorpha</taxon>
        <taxon>Muroidea</taxon>
        <taxon>Muridae</taxon>
        <taxon>Murinae</taxon>
        <taxon>Rattus</taxon>
    </lineage>
</organism>
<protein>
    <recommendedName>
        <fullName>Protein AF1q</fullName>
    </recommendedName>
</protein>
<keyword id="KW-0963">Cytoplasm</keyword>
<keyword id="KW-0206">Cytoskeleton</keyword>
<keyword id="KW-0539">Nucleus</keyword>
<keyword id="KW-0597">Phosphoprotein</keyword>
<keyword id="KW-1185">Reference proteome</keyword>
<keyword id="KW-0832">Ubl conjugation</keyword>